<reference key="1">
    <citation type="submission" date="2003-01" db="EMBL/GenBank/DDBJ databases">
        <title>Chloroplast DNA phylogeny of tribe Heliantheae (Asteraceae).</title>
        <authorList>
            <person name="Panero J.L."/>
            <person name="Baldwin B.G."/>
            <person name="Schilling E.E."/>
            <person name="Clevinger J.A."/>
        </authorList>
    </citation>
    <scope>NUCLEOTIDE SEQUENCE [GENOMIC DNA]</scope>
</reference>
<accession>Q8HVN9</accession>
<feature type="chain" id="PRO_0000250823" description="NAD(P)H-quinone oxidoreductase subunit I, chloroplastic">
    <location>
        <begin position="1"/>
        <end position="166"/>
    </location>
</feature>
<feature type="domain" description="4Fe-4S ferredoxin-type 1" evidence="1">
    <location>
        <begin position="55"/>
        <end position="84"/>
    </location>
</feature>
<feature type="domain" description="4Fe-4S ferredoxin-type 2" evidence="1">
    <location>
        <begin position="95"/>
        <end position="124"/>
    </location>
</feature>
<feature type="binding site" evidence="1">
    <location>
        <position position="64"/>
    </location>
    <ligand>
        <name>[4Fe-4S] cluster</name>
        <dbReference type="ChEBI" id="CHEBI:49883"/>
        <label>1</label>
    </ligand>
</feature>
<feature type="binding site" evidence="1">
    <location>
        <position position="67"/>
    </location>
    <ligand>
        <name>[4Fe-4S] cluster</name>
        <dbReference type="ChEBI" id="CHEBI:49883"/>
        <label>1</label>
    </ligand>
</feature>
<feature type="binding site" evidence="1">
    <location>
        <position position="70"/>
    </location>
    <ligand>
        <name>[4Fe-4S] cluster</name>
        <dbReference type="ChEBI" id="CHEBI:49883"/>
        <label>1</label>
    </ligand>
</feature>
<feature type="binding site" evidence="1">
    <location>
        <position position="74"/>
    </location>
    <ligand>
        <name>[4Fe-4S] cluster</name>
        <dbReference type="ChEBI" id="CHEBI:49883"/>
        <label>2</label>
    </ligand>
</feature>
<feature type="binding site" evidence="1">
    <location>
        <position position="104"/>
    </location>
    <ligand>
        <name>[4Fe-4S] cluster</name>
        <dbReference type="ChEBI" id="CHEBI:49883"/>
        <label>2</label>
    </ligand>
</feature>
<feature type="binding site" evidence="1">
    <location>
        <position position="107"/>
    </location>
    <ligand>
        <name>[4Fe-4S] cluster</name>
        <dbReference type="ChEBI" id="CHEBI:49883"/>
        <label>2</label>
    </ligand>
</feature>
<feature type="binding site" evidence="1">
    <location>
        <position position="110"/>
    </location>
    <ligand>
        <name>[4Fe-4S] cluster</name>
        <dbReference type="ChEBI" id="CHEBI:49883"/>
        <label>2</label>
    </ligand>
</feature>
<feature type="binding site" evidence="1">
    <location>
        <position position="114"/>
    </location>
    <ligand>
        <name>[4Fe-4S] cluster</name>
        <dbReference type="ChEBI" id="CHEBI:49883"/>
        <label>1</label>
    </ligand>
</feature>
<evidence type="ECO:0000255" key="1">
    <source>
        <dbReference type="HAMAP-Rule" id="MF_01351"/>
    </source>
</evidence>
<protein>
    <recommendedName>
        <fullName evidence="1">NAD(P)H-quinone oxidoreductase subunit I, chloroplastic</fullName>
        <ecNumber evidence="1">7.1.1.-</ecNumber>
    </recommendedName>
    <alternativeName>
        <fullName evidence="1">NAD(P)H dehydrogenase subunit I</fullName>
        <shortName evidence="1">NDH subunit I</shortName>
    </alternativeName>
    <alternativeName>
        <fullName evidence="1">NADH-plastoquinone oxidoreductase subunit I</fullName>
    </alternativeName>
</protein>
<proteinExistence type="inferred from homology"/>
<name>NDHI_OBLMI</name>
<dbReference type="EC" id="7.1.1.-" evidence="1"/>
<dbReference type="EMBL" id="AF383824">
    <property type="protein sequence ID" value="AAN61765.1"/>
    <property type="molecule type" value="Genomic_DNA"/>
</dbReference>
<dbReference type="SMR" id="Q8HVN9"/>
<dbReference type="GO" id="GO:0009535">
    <property type="term" value="C:chloroplast thylakoid membrane"/>
    <property type="evidence" value="ECO:0007669"/>
    <property type="project" value="UniProtKB-SubCell"/>
</dbReference>
<dbReference type="GO" id="GO:0051539">
    <property type="term" value="F:4 iron, 4 sulfur cluster binding"/>
    <property type="evidence" value="ECO:0007669"/>
    <property type="project" value="UniProtKB-KW"/>
</dbReference>
<dbReference type="GO" id="GO:0005506">
    <property type="term" value="F:iron ion binding"/>
    <property type="evidence" value="ECO:0007669"/>
    <property type="project" value="UniProtKB-UniRule"/>
</dbReference>
<dbReference type="GO" id="GO:0008137">
    <property type="term" value="F:NADH dehydrogenase (ubiquinone) activity"/>
    <property type="evidence" value="ECO:0007669"/>
    <property type="project" value="InterPro"/>
</dbReference>
<dbReference type="GO" id="GO:0048038">
    <property type="term" value="F:quinone binding"/>
    <property type="evidence" value="ECO:0007669"/>
    <property type="project" value="UniProtKB-KW"/>
</dbReference>
<dbReference type="GO" id="GO:0019684">
    <property type="term" value="P:photosynthesis, light reaction"/>
    <property type="evidence" value="ECO:0007669"/>
    <property type="project" value="UniProtKB-UniRule"/>
</dbReference>
<dbReference type="FunFam" id="3.30.70.3270:FF:000006">
    <property type="entry name" value="NAD(P)H-quinone oxidoreductase subunit I, chloroplastic"/>
    <property type="match status" value="1"/>
</dbReference>
<dbReference type="Gene3D" id="3.30.70.3270">
    <property type="match status" value="1"/>
</dbReference>
<dbReference type="HAMAP" id="MF_01351">
    <property type="entry name" value="NDH1_NuoI"/>
    <property type="match status" value="1"/>
</dbReference>
<dbReference type="InterPro" id="IPR017896">
    <property type="entry name" value="4Fe4S_Fe-S-bd"/>
</dbReference>
<dbReference type="InterPro" id="IPR017900">
    <property type="entry name" value="4Fe4S_Fe_S_CS"/>
</dbReference>
<dbReference type="InterPro" id="IPR010226">
    <property type="entry name" value="NADH_quinone_OxRdtase_chainI"/>
</dbReference>
<dbReference type="InterPro" id="IPR004497">
    <property type="entry name" value="NDHI"/>
</dbReference>
<dbReference type="NCBIfam" id="TIGR00403">
    <property type="entry name" value="ndhI"/>
    <property type="match status" value="1"/>
</dbReference>
<dbReference type="NCBIfam" id="TIGR01971">
    <property type="entry name" value="NuoI"/>
    <property type="match status" value="1"/>
</dbReference>
<dbReference type="NCBIfam" id="NF004537">
    <property type="entry name" value="PRK05888.1-3"/>
    <property type="match status" value="1"/>
</dbReference>
<dbReference type="PANTHER" id="PTHR47275">
    <property type="entry name" value="NAD(P)H-QUINONE OXIDOREDUCTASE SUBUNIT I, CHLOROPLASTIC"/>
    <property type="match status" value="1"/>
</dbReference>
<dbReference type="PANTHER" id="PTHR47275:SF1">
    <property type="entry name" value="NAD(P)H-QUINONE OXIDOREDUCTASE SUBUNIT I, CHLOROPLASTIC"/>
    <property type="match status" value="1"/>
</dbReference>
<dbReference type="Pfam" id="PF00037">
    <property type="entry name" value="Fer4"/>
    <property type="match status" value="2"/>
</dbReference>
<dbReference type="SUPFAM" id="SSF54862">
    <property type="entry name" value="4Fe-4S ferredoxins"/>
    <property type="match status" value="1"/>
</dbReference>
<dbReference type="PROSITE" id="PS00198">
    <property type="entry name" value="4FE4S_FER_1"/>
    <property type="match status" value="2"/>
</dbReference>
<dbReference type="PROSITE" id="PS51379">
    <property type="entry name" value="4FE4S_FER_2"/>
    <property type="match status" value="2"/>
</dbReference>
<keyword id="KW-0004">4Fe-4S</keyword>
<keyword id="KW-0150">Chloroplast</keyword>
<keyword id="KW-0408">Iron</keyword>
<keyword id="KW-0411">Iron-sulfur</keyword>
<keyword id="KW-0472">Membrane</keyword>
<keyword id="KW-0479">Metal-binding</keyword>
<keyword id="KW-0520">NAD</keyword>
<keyword id="KW-0521">NADP</keyword>
<keyword id="KW-0934">Plastid</keyword>
<keyword id="KW-0618">Plastoquinone</keyword>
<keyword id="KW-0874">Quinone</keyword>
<keyword id="KW-0677">Repeat</keyword>
<keyword id="KW-0793">Thylakoid</keyword>
<keyword id="KW-1278">Translocase</keyword>
<gene>
    <name evidence="1" type="primary">ndhI</name>
</gene>
<geneLocation type="chloroplast"/>
<comment type="function">
    <text evidence="1">NDH shuttles electrons from NAD(P)H:plastoquinone, via FMN and iron-sulfur (Fe-S) centers, to quinones in the photosynthetic chain and possibly in a chloroplast respiratory chain. The immediate electron acceptor for the enzyme in this species is believed to be plastoquinone. Couples the redox reaction to proton translocation, and thus conserves the redox energy in a proton gradient.</text>
</comment>
<comment type="catalytic activity">
    <reaction evidence="1">
        <text>a plastoquinone + NADH + (n+1) H(+)(in) = a plastoquinol + NAD(+) + n H(+)(out)</text>
        <dbReference type="Rhea" id="RHEA:42608"/>
        <dbReference type="Rhea" id="RHEA-COMP:9561"/>
        <dbReference type="Rhea" id="RHEA-COMP:9562"/>
        <dbReference type="ChEBI" id="CHEBI:15378"/>
        <dbReference type="ChEBI" id="CHEBI:17757"/>
        <dbReference type="ChEBI" id="CHEBI:57540"/>
        <dbReference type="ChEBI" id="CHEBI:57945"/>
        <dbReference type="ChEBI" id="CHEBI:62192"/>
    </reaction>
</comment>
<comment type="catalytic activity">
    <reaction evidence="1">
        <text>a plastoquinone + NADPH + (n+1) H(+)(in) = a plastoquinol + NADP(+) + n H(+)(out)</text>
        <dbReference type="Rhea" id="RHEA:42612"/>
        <dbReference type="Rhea" id="RHEA-COMP:9561"/>
        <dbReference type="Rhea" id="RHEA-COMP:9562"/>
        <dbReference type="ChEBI" id="CHEBI:15378"/>
        <dbReference type="ChEBI" id="CHEBI:17757"/>
        <dbReference type="ChEBI" id="CHEBI:57783"/>
        <dbReference type="ChEBI" id="CHEBI:58349"/>
        <dbReference type="ChEBI" id="CHEBI:62192"/>
    </reaction>
</comment>
<comment type="cofactor">
    <cofactor evidence="1">
        <name>[4Fe-4S] cluster</name>
        <dbReference type="ChEBI" id="CHEBI:49883"/>
    </cofactor>
    <text evidence="1">Binds 2 [4Fe-4S] clusters per subunit.</text>
</comment>
<comment type="subunit">
    <text evidence="1">NDH is composed of at least 16 different subunits, 5 of which are encoded in the nucleus.</text>
</comment>
<comment type="subcellular location">
    <subcellularLocation>
        <location evidence="1">Plastid</location>
        <location evidence="1">Chloroplast thylakoid membrane</location>
        <topology evidence="1">Peripheral membrane protein</topology>
    </subcellularLocation>
</comment>
<comment type="similarity">
    <text evidence="1">Belongs to the complex I 23 kDa subunit family.</text>
</comment>
<sequence>MFPMVPEFMNYGQQTVRAARYIGQGFMITLSHANRLPVTIQYPYEKLITSERFRGRIHFEFDKCIACEVCVRVCPIDLPVVDWKLETDIRKKRLLNYSIDFGICIFCGNCVEYCPTNCLSMTEEYELSTYDRHELNYNQIALGRLPMSIIDDYTIRTILNLPEIKT</sequence>
<organism>
    <name type="scientific">Oblivia mikanioides</name>
    <name type="common">Salmea mikanioides</name>
    <dbReference type="NCBI Taxonomy" id="183058"/>
    <lineage>
        <taxon>Eukaryota</taxon>
        <taxon>Viridiplantae</taxon>
        <taxon>Streptophyta</taxon>
        <taxon>Embryophyta</taxon>
        <taxon>Tracheophyta</taxon>
        <taxon>Spermatophyta</taxon>
        <taxon>Magnoliopsida</taxon>
        <taxon>eudicotyledons</taxon>
        <taxon>Gunneridae</taxon>
        <taxon>Pentapetalae</taxon>
        <taxon>asterids</taxon>
        <taxon>campanulids</taxon>
        <taxon>Asterales</taxon>
        <taxon>Asteraceae</taxon>
        <taxon>Asteroideae</taxon>
        <taxon>Heliantheae alliance</taxon>
        <taxon>Heliantheae</taxon>
        <taxon>Oblivia</taxon>
    </lineage>
</organism>